<accession>P00429</accession>
<accession>Q54A32</accession>
<organism>
    <name type="scientific">Bos taurus</name>
    <name type="common">Bovine</name>
    <dbReference type="NCBI Taxonomy" id="9913"/>
    <lineage>
        <taxon>Eukaryota</taxon>
        <taxon>Metazoa</taxon>
        <taxon>Chordata</taxon>
        <taxon>Craniata</taxon>
        <taxon>Vertebrata</taxon>
        <taxon>Euteleostomi</taxon>
        <taxon>Mammalia</taxon>
        <taxon>Eutheria</taxon>
        <taxon>Laurasiatheria</taxon>
        <taxon>Artiodactyla</taxon>
        <taxon>Ruminantia</taxon>
        <taxon>Pecora</taxon>
        <taxon>Bovidae</taxon>
        <taxon>Bovinae</taxon>
        <taxon>Bos</taxon>
    </lineage>
</organism>
<sequence length="86" mass="10156">MAEDIQAKIKNYQTAPFDSRFPNQNQTRNCWQNYLDFHRCEKAMTAKGGDVSVCEWYRRVYKSLCPISWVSTWDDRRAEGTFPGKI</sequence>
<feature type="initiator methionine" description="Removed" evidence="5 10">
    <location>
        <position position="1"/>
    </location>
</feature>
<feature type="chain" id="PRO_0000194911" description="Cytochrome c oxidase subunit 6B1">
    <location>
        <begin position="2"/>
        <end position="86"/>
    </location>
</feature>
<feature type="domain" description="CHCH" evidence="3">
    <location>
        <begin position="27"/>
        <end position="73"/>
    </location>
</feature>
<feature type="short sequence motif" description="Cx9C motif" evidence="3">
    <location>
        <begin position="30"/>
        <end position="40"/>
    </location>
</feature>
<feature type="short sequence motif" description="Cx10C motif" evidence="3">
    <location>
        <begin position="54"/>
        <end position="65"/>
    </location>
</feature>
<feature type="modified residue" description="N-acetylalanine" evidence="10">
    <location>
        <position position="2"/>
    </location>
</feature>
<feature type="modified residue" description="N6-acetyllysine" evidence="1">
    <location>
        <position position="62"/>
    </location>
</feature>
<feature type="disulfide bond" evidence="4 7 9 11">
    <location>
        <begin position="30"/>
        <end position="65"/>
    </location>
</feature>
<feature type="disulfide bond" evidence="4 7 9 11">
    <location>
        <begin position="40"/>
        <end position="54"/>
    </location>
</feature>
<feature type="helix" evidence="14">
    <location>
        <begin position="9"/>
        <end position="11"/>
    </location>
</feature>
<feature type="strand" evidence="13">
    <location>
        <begin position="23"/>
        <end position="25"/>
    </location>
</feature>
<feature type="helix" evidence="13">
    <location>
        <begin position="27"/>
        <end position="46"/>
    </location>
</feature>
<feature type="helix" evidence="13">
    <location>
        <begin position="51"/>
        <end position="54"/>
    </location>
</feature>
<feature type="helix" evidence="13">
    <location>
        <begin position="55"/>
        <end position="64"/>
    </location>
</feature>
<feature type="helix" evidence="13">
    <location>
        <begin position="67"/>
        <end position="79"/>
    </location>
</feature>
<name>CX6B1_BOVIN</name>
<gene>
    <name type="primary">COX6B1</name>
    <name type="synonym">COX6B</name>
</gene>
<keyword id="KW-0002">3D-structure</keyword>
<keyword id="KW-0007">Acetylation</keyword>
<keyword id="KW-0903">Direct protein sequencing</keyword>
<keyword id="KW-1015">Disulfide bond</keyword>
<keyword id="KW-0472">Membrane</keyword>
<keyword id="KW-0496">Mitochondrion</keyword>
<keyword id="KW-0999">Mitochondrion inner membrane</keyword>
<keyword id="KW-1185">Reference proteome</keyword>
<proteinExistence type="evidence at protein level"/>
<reference key="1">
    <citation type="journal article" date="1989" name="Nucleic Acids Res.">
        <title>Nucleotide sequence of the cDNA encoding subunit AED (VIB) of beef heart cytochrome c oxidase.</title>
        <authorList>
            <person name="Lightowlers R.N."/>
            <person name="Capaldi R.A."/>
        </authorList>
    </citation>
    <scope>NUCLEOTIDE SEQUENCE [MRNA]</scope>
    <source>
        <tissue>Heart</tissue>
    </source>
</reference>
<reference key="2">
    <citation type="submission" date="2005-08" db="EMBL/GenBank/DDBJ databases">
        <authorList>
            <consortium name="NIH - Mammalian Gene Collection (MGC) project"/>
        </authorList>
    </citation>
    <scope>NUCLEOTIDE SEQUENCE [LARGE SCALE MRNA]</scope>
    <source>
        <strain>Crossbred X Angus</strain>
        <tissue>Ileum</tissue>
    </source>
</reference>
<reference key="3">
    <citation type="journal article" date="1979" name="Hoppe-Seyler's Z. Physiol. Chem.">
        <title>Studies on cytochrome c oxidase, VIII. The amino acid sequence of polypeptide VII.</title>
        <authorList>
            <person name="Steffens G.C.M."/>
            <person name="Steffens G.J."/>
            <person name="Buse G."/>
        </authorList>
    </citation>
    <scope>PROTEIN SEQUENCE OF 2-86</scope>
</reference>
<reference key="4">
    <citation type="journal article" date="1981" name="J. Biol. Chem.">
        <title>The complete amino acid sequence of bovine heart cytochrome oxidase subunit VI.</title>
        <authorList>
            <person name="Tanaka M."/>
            <person name="Yasunobu K.T."/>
            <person name="Wei Y.-H."/>
            <person name="King T.E."/>
        </authorList>
    </citation>
    <scope>PROTEIN SEQUENCE OF 2-86</scope>
    <scope>ACETYLATION AT ALA-2</scope>
</reference>
<reference key="5">
    <citation type="journal article" date="1988" name="Biochemistry">
        <title>Tissue-specific differences between heart and liver cytochrome c oxidase.</title>
        <authorList>
            <person name="Yanamura W."/>
            <person name="Zhang Y.-Z."/>
            <person name="Takamiya S."/>
            <person name="Capaldi R.A."/>
        </authorList>
    </citation>
    <scope>PROTEIN SEQUENCE OF 45-67</scope>
    <source>
        <tissue>Liver</tissue>
    </source>
</reference>
<reference key="6">
    <citation type="journal article" date="2016" name="J. Biol. Chem.">
        <title>Purification of active respiratory supercomplex from bovine heart mitochondria enables functional studies.</title>
        <authorList>
            <person name="Shinzawa-Itoh K."/>
            <person name="Shimomura H."/>
            <person name="Yanagisawa S."/>
            <person name="Shimada S."/>
            <person name="Takahashi R."/>
            <person name="Oosaki M."/>
            <person name="Ogura T."/>
            <person name="Tsukihara T."/>
        </authorList>
    </citation>
    <scope>SUBUNIT</scope>
</reference>
<reference key="7">
    <citation type="journal article" date="1996" name="Science">
        <title>The whole structure of the 13-subunit oxidized cytochrome c oxidase at 2.8 A.</title>
        <authorList>
            <person name="Tsukihara T."/>
            <person name="Aoyama H."/>
            <person name="Yamashita E."/>
            <person name="Tomizaki T."/>
            <person name="Yamaguchi H."/>
            <person name="Shinzawa-Itoh K."/>
            <person name="Nakashima R."/>
            <person name="Yaono R."/>
            <person name="Yoshikawa S."/>
        </authorList>
    </citation>
    <scope>X-RAY CRYSTALLOGRAPHY (2.8 ANGSTROMS)</scope>
    <scope>DISULFIDE BONDS</scope>
</reference>
<reference key="8">
    <citation type="journal article" date="1999" name="Acta Crystallogr. D">
        <title>Structure analysis of bovine heart cytochrome c oxidase at 2.8 A resolution.</title>
        <authorList>
            <person name="Tomizaki T."/>
            <person name="Yamashita E."/>
            <person name="Yamaguchi H."/>
            <person name="Aoyama H."/>
            <person name="Tsukihara T."/>
            <person name="Shinzawa-Itoh K."/>
            <person name="Nakashima R."/>
            <person name="Yaono R."/>
            <person name="Yoshikawa S."/>
        </authorList>
    </citation>
    <scope>X-RAY CRYSTALLOGRAPHY (2.8 ANGSTROMS)</scope>
    <source>
        <tissue>Heart</tissue>
    </source>
</reference>
<reference key="9">
    <citation type="journal article" date="2000" name="Acta Crystallogr. D">
        <title>X-ray structure of azide-bound fully oxidized cytochrome c oxidase from bovine heart at 2.9 A resolution.</title>
        <authorList>
            <person name="Fei M.J."/>
            <person name="Yamashita E."/>
            <person name="Inoue N."/>
            <person name="Yao M."/>
            <person name="Yamaguchi H."/>
            <person name="Tsukihara T."/>
            <person name="Shinzawa-Itoh K."/>
            <person name="Nakashima R."/>
            <person name="Yoshikawa S."/>
        </authorList>
    </citation>
    <scope>X-RAY CRYSTALLOGRAPHY (2.9 ANGSTROMS)</scope>
    <source>
        <tissue>Heart</tissue>
    </source>
</reference>
<reference key="10">
    <citation type="journal article" date="2010" name="Proc. Natl. Acad. Sci. U.S.A.">
        <title>Bovine cytochrome c oxidase structures enable O2 reduction with minimization of reactive oxygens and provide a proton-pumping gate.</title>
        <authorList>
            <person name="Muramoto K."/>
            <person name="Ohta K."/>
            <person name="Shinzawa-Itoh K."/>
            <person name="Kanda K."/>
            <person name="Taniguchi M."/>
            <person name="Nabekura H."/>
            <person name="Yamashita E."/>
            <person name="Tsukihara T."/>
            <person name="Yoshikawa S."/>
        </authorList>
    </citation>
    <scope>X-RAY CRYSTALLOGRAPHY (1.80 ANGSTROMS)</scope>
    <scope>DISULFIDE BONDS</scope>
</reference>
<reference key="11">
    <citation type="journal article" date="2016" name="Elife">
        <title>Functional asymmetry and electron flow in the bovine respirasome.</title>
        <authorList>
            <person name="Sousa J.S."/>
            <person name="Mills D.J."/>
            <person name="Vonck J."/>
            <person name="Kuehlbrandt W."/>
        </authorList>
    </citation>
    <scope>STRUCTURE BY ELECTRON MICROSCOPY (9.10 ANGSTROMS)</scope>
</reference>
<reference key="12">
    <citation type="journal article" date="2016" name="J. Biol. Chem.">
        <title>The Mg2+-containing water cluster of mammalian cytochrome c oxidase collects four pumping proton equivalents in each catalytic cycle.</title>
        <authorList>
            <person name="Yano N."/>
            <person name="Muramoto K."/>
            <person name="Shimada A."/>
            <person name="Takemura S."/>
            <person name="Baba J."/>
            <person name="Fujisawa H."/>
            <person name="Mochizuki M."/>
            <person name="Shinzawa-Itoh K."/>
            <person name="Yamashita E."/>
            <person name="Tsukihara T."/>
            <person name="Yoshikawa S."/>
        </authorList>
    </citation>
    <scope>X-RAY CRYSTALLOGRAPHY (1.50 ANGSTROMS)</scope>
    <scope>DISULFIDE BONDS</scope>
</reference>
<reference key="13">
    <citation type="journal article" date="2019" name="Proc. Natl. Acad. Sci. U.S.A.">
        <title>Monomeric structure of an active form of bovine cytochrome c oxidase.</title>
        <authorList>
            <person name="Shinzawa-Itoh K."/>
            <person name="Sugimura T."/>
            <person name="Misaki T."/>
            <person name="Tadehara Y."/>
            <person name="Yamamoto S."/>
            <person name="Hanada M."/>
            <person name="Yano N."/>
            <person name="Nakagawa T."/>
            <person name="Uene S."/>
            <person name="Yamada T."/>
            <person name="Aoyama H."/>
            <person name="Yamashita E."/>
            <person name="Tsukihara T."/>
            <person name="Yoshikawa S."/>
            <person name="Muramoto K."/>
        </authorList>
    </citation>
    <scope>X-RAY CRYSTALLOGRAPHY (1.85 ANGSTROMS)</scope>
    <scope>DISULFIDE BONDS</scope>
</reference>
<protein>
    <recommendedName>
        <fullName>Cytochrome c oxidase subunit 6B1</fullName>
    </recommendedName>
    <alternativeName>
        <fullName>Cytochrome c oxidase polypeptide VII</fullName>
    </alternativeName>
    <alternativeName>
        <fullName>Cytochrome c oxidase subunit AED</fullName>
    </alternativeName>
    <alternativeName>
        <fullName>Cytochrome c oxidase subunit VIb isoform 1</fullName>
        <shortName>COX VIb-1</shortName>
    </alternativeName>
</protein>
<dbReference type="EMBL" id="X15112">
    <property type="protein sequence ID" value="CAA33211.1"/>
    <property type="molecule type" value="mRNA"/>
</dbReference>
<dbReference type="EMBL" id="BC102366">
    <property type="protein sequence ID" value="AAI02367.1"/>
    <property type="molecule type" value="mRNA"/>
</dbReference>
<dbReference type="PIR" id="S05432">
    <property type="entry name" value="OGBO7"/>
</dbReference>
<dbReference type="RefSeq" id="NP_788848.1">
    <property type="nucleotide sequence ID" value="NM_176675.4"/>
</dbReference>
<dbReference type="PDB" id="1OCC">
    <property type="method" value="X-ray"/>
    <property type="resolution" value="2.80 A"/>
    <property type="chains" value="H/U=2-86"/>
</dbReference>
<dbReference type="PDB" id="1OCO">
    <property type="method" value="X-ray"/>
    <property type="resolution" value="2.80 A"/>
    <property type="chains" value="H/U=2-86"/>
</dbReference>
<dbReference type="PDB" id="1OCR">
    <property type="method" value="X-ray"/>
    <property type="resolution" value="2.35 A"/>
    <property type="chains" value="H/U=2-86"/>
</dbReference>
<dbReference type="PDB" id="1OCZ">
    <property type="method" value="X-ray"/>
    <property type="resolution" value="2.90 A"/>
    <property type="chains" value="H/U=2-86"/>
</dbReference>
<dbReference type="PDB" id="1V54">
    <property type="method" value="X-ray"/>
    <property type="resolution" value="1.80 A"/>
    <property type="chains" value="H/U=2-86"/>
</dbReference>
<dbReference type="PDB" id="1V55">
    <property type="method" value="X-ray"/>
    <property type="resolution" value="1.90 A"/>
    <property type="chains" value="H/U=2-86"/>
</dbReference>
<dbReference type="PDB" id="2DYR">
    <property type="method" value="X-ray"/>
    <property type="resolution" value="1.80 A"/>
    <property type="chains" value="H/U=2-86"/>
</dbReference>
<dbReference type="PDB" id="2DYS">
    <property type="method" value="X-ray"/>
    <property type="resolution" value="2.20 A"/>
    <property type="chains" value="H/U=2-86"/>
</dbReference>
<dbReference type="PDB" id="2EIJ">
    <property type="method" value="X-ray"/>
    <property type="resolution" value="1.90 A"/>
    <property type="chains" value="H/U=2-86"/>
</dbReference>
<dbReference type="PDB" id="2EIK">
    <property type="method" value="X-ray"/>
    <property type="resolution" value="2.10 A"/>
    <property type="chains" value="H/U=2-86"/>
</dbReference>
<dbReference type="PDB" id="2EIL">
    <property type="method" value="X-ray"/>
    <property type="resolution" value="2.10 A"/>
    <property type="chains" value="H/U=2-86"/>
</dbReference>
<dbReference type="PDB" id="2EIM">
    <property type="method" value="X-ray"/>
    <property type="resolution" value="2.60 A"/>
    <property type="chains" value="H/U=2-86"/>
</dbReference>
<dbReference type="PDB" id="2EIN">
    <property type="method" value="X-ray"/>
    <property type="resolution" value="2.70 A"/>
    <property type="chains" value="H/U=2-86"/>
</dbReference>
<dbReference type="PDB" id="2OCC">
    <property type="method" value="X-ray"/>
    <property type="resolution" value="2.30 A"/>
    <property type="chains" value="H/U=2-86"/>
</dbReference>
<dbReference type="PDB" id="2Y69">
    <property type="method" value="X-ray"/>
    <property type="resolution" value="1.95 A"/>
    <property type="chains" value="H/U=1-86"/>
</dbReference>
<dbReference type="PDB" id="2YBB">
    <property type="method" value="EM"/>
    <property type="resolution" value="19.00 A"/>
    <property type="chains" value="S=2-86"/>
</dbReference>
<dbReference type="PDB" id="2ZXW">
    <property type="method" value="X-ray"/>
    <property type="resolution" value="2.50 A"/>
    <property type="chains" value="H/U=2-86"/>
</dbReference>
<dbReference type="PDB" id="3ABK">
    <property type="method" value="X-ray"/>
    <property type="resolution" value="2.00 A"/>
    <property type="chains" value="H/U=2-86"/>
</dbReference>
<dbReference type="PDB" id="3ABL">
    <property type="method" value="X-ray"/>
    <property type="resolution" value="2.10 A"/>
    <property type="chains" value="H/U=2-86"/>
</dbReference>
<dbReference type="PDB" id="3ABM">
    <property type="method" value="X-ray"/>
    <property type="resolution" value="1.95 A"/>
    <property type="chains" value="H/U=2-86"/>
</dbReference>
<dbReference type="PDB" id="3AG1">
    <property type="method" value="X-ray"/>
    <property type="resolution" value="2.20 A"/>
    <property type="chains" value="H/U=2-86"/>
</dbReference>
<dbReference type="PDB" id="3AG2">
    <property type="method" value="X-ray"/>
    <property type="resolution" value="1.80 A"/>
    <property type="chains" value="H/U=2-86"/>
</dbReference>
<dbReference type="PDB" id="3AG3">
    <property type="method" value="X-ray"/>
    <property type="resolution" value="1.80 A"/>
    <property type="chains" value="H/U=2-86"/>
</dbReference>
<dbReference type="PDB" id="3AG4">
    <property type="method" value="X-ray"/>
    <property type="resolution" value="2.05 A"/>
    <property type="chains" value="H/U=2-86"/>
</dbReference>
<dbReference type="PDB" id="3ASN">
    <property type="method" value="X-ray"/>
    <property type="resolution" value="3.00 A"/>
    <property type="chains" value="H/U=2-86"/>
</dbReference>
<dbReference type="PDB" id="3ASO">
    <property type="method" value="X-ray"/>
    <property type="resolution" value="2.30 A"/>
    <property type="chains" value="H/U=2-86"/>
</dbReference>
<dbReference type="PDB" id="3WG7">
    <property type="method" value="X-ray"/>
    <property type="resolution" value="1.90 A"/>
    <property type="chains" value="H/U=2-86"/>
</dbReference>
<dbReference type="PDB" id="3X2Q">
    <property type="method" value="X-ray"/>
    <property type="resolution" value="2.00 A"/>
    <property type="chains" value="H/U=2-86"/>
</dbReference>
<dbReference type="PDB" id="5B1A">
    <property type="method" value="X-ray"/>
    <property type="resolution" value="1.50 A"/>
    <property type="chains" value="H/U=2-86"/>
</dbReference>
<dbReference type="PDB" id="5B1B">
    <property type="method" value="X-ray"/>
    <property type="resolution" value="1.60 A"/>
    <property type="chains" value="H/U=2-86"/>
</dbReference>
<dbReference type="PDB" id="5B3S">
    <property type="method" value="X-ray"/>
    <property type="resolution" value="1.68 A"/>
    <property type="chains" value="H/U=2-86"/>
</dbReference>
<dbReference type="PDB" id="5GPN">
    <property type="method" value="EM"/>
    <property type="resolution" value="5.40 A"/>
    <property type="chains" value="5=2-86"/>
</dbReference>
<dbReference type="PDB" id="5IY5">
    <property type="method" value="X-ray"/>
    <property type="resolution" value="2.00 A"/>
    <property type="chains" value="H/U=8-86"/>
</dbReference>
<dbReference type="PDB" id="5LUF">
    <property type="method" value="EM"/>
    <property type="resolution" value="9.10 A"/>
    <property type="chains" value="5=2-86"/>
</dbReference>
<dbReference type="PDB" id="5W97">
    <property type="method" value="X-ray"/>
    <property type="resolution" value="2.30 A"/>
    <property type="chains" value="H/h=2-86"/>
</dbReference>
<dbReference type="PDB" id="5WAU">
    <property type="method" value="X-ray"/>
    <property type="resolution" value="1.95 A"/>
    <property type="chains" value="H/h=2-86"/>
</dbReference>
<dbReference type="PDB" id="5X19">
    <property type="method" value="X-ray"/>
    <property type="resolution" value="2.20 A"/>
    <property type="chains" value="H/U=2-86"/>
</dbReference>
<dbReference type="PDB" id="5X1B">
    <property type="method" value="X-ray"/>
    <property type="resolution" value="2.40 A"/>
    <property type="chains" value="H/U=2-86"/>
</dbReference>
<dbReference type="PDB" id="5X1F">
    <property type="method" value="X-ray"/>
    <property type="resolution" value="2.20 A"/>
    <property type="chains" value="H/U=2-86"/>
</dbReference>
<dbReference type="PDB" id="5XDQ">
    <property type="method" value="X-ray"/>
    <property type="resolution" value="1.77 A"/>
    <property type="chains" value="H/U=2-86"/>
</dbReference>
<dbReference type="PDB" id="5XDX">
    <property type="method" value="X-ray"/>
    <property type="resolution" value="1.99 A"/>
    <property type="chains" value="H/U=2-86"/>
</dbReference>
<dbReference type="PDB" id="5XTH">
    <property type="method" value="EM"/>
    <property type="resolution" value="3.90 A"/>
    <property type="chains" value="4=12-86"/>
</dbReference>
<dbReference type="PDB" id="5XTI">
    <property type="method" value="EM"/>
    <property type="resolution" value="17.40 A"/>
    <property type="chains" value="4/B4=12-86"/>
</dbReference>
<dbReference type="PDB" id="5Z84">
    <property type="method" value="X-ray"/>
    <property type="resolution" value="1.85 A"/>
    <property type="chains" value="H/U=2-86"/>
</dbReference>
<dbReference type="PDB" id="5Z85">
    <property type="method" value="X-ray"/>
    <property type="resolution" value="1.85 A"/>
    <property type="chains" value="H/U=2-86"/>
</dbReference>
<dbReference type="PDB" id="5Z86">
    <property type="method" value="X-ray"/>
    <property type="resolution" value="1.85 A"/>
    <property type="chains" value="H/U=2-86"/>
</dbReference>
<dbReference type="PDB" id="5ZCO">
    <property type="method" value="X-ray"/>
    <property type="resolution" value="1.90 A"/>
    <property type="chains" value="H/U=2-86"/>
</dbReference>
<dbReference type="PDB" id="5ZCP">
    <property type="method" value="X-ray"/>
    <property type="resolution" value="1.65 A"/>
    <property type="chains" value="H/U=2-86"/>
</dbReference>
<dbReference type="PDB" id="5ZCQ">
    <property type="method" value="X-ray"/>
    <property type="resolution" value="1.65 A"/>
    <property type="chains" value="H/U=2-86"/>
</dbReference>
<dbReference type="PDB" id="6J8M">
    <property type="method" value="X-ray"/>
    <property type="resolution" value="1.90 A"/>
    <property type="chains" value="H/U=2-86"/>
</dbReference>
<dbReference type="PDB" id="6JUW">
    <property type="method" value="X-ray"/>
    <property type="resolution" value="1.80 A"/>
    <property type="chains" value="H/U=8-86"/>
</dbReference>
<dbReference type="PDB" id="6JY3">
    <property type="method" value="X-ray"/>
    <property type="resolution" value="1.85 A"/>
    <property type="chains" value="H=2-86"/>
</dbReference>
<dbReference type="PDB" id="6JY4">
    <property type="method" value="X-ray"/>
    <property type="resolution" value="1.95 A"/>
    <property type="chains" value="H=2-86"/>
</dbReference>
<dbReference type="PDB" id="6NKN">
    <property type="method" value="X-ray"/>
    <property type="resolution" value="2.50 A"/>
    <property type="chains" value="H/U=2-86"/>
</dbReference>
<dbReference type="PDB" id="6NMF">
    <property type="method" value="X-ray"/>
    <property type="resolution" value="2.80 A"/>
    <property type="chains" value="H/U=2-86"/>
</dbReference>
<dbReference type="PDB" id="6NMP">
    <property type="method" value="X-ray"/>
    <property type="resolution" value="2.90 A"/>
    <property type="chains" value="H/U=2-86"/>
</dbReference>
<dbReference type="PDB" id="7COH">
    <property type="method" value="X-ray"/>
    <property type="resolution" value="1.30 A"/>
    <property type="chains" value="H/U=2-86"/>
</dbReference>
<dbReference type="PDB" id="7CP5">
    <property type="method" value="X-ray"/>
    <property type="resolution" value="1.76 A"/>
    <property type="chains" value="H/U=8-86"/>
</dbReference>
<dbReference type="PDB" id="7D5W">
    <property type="method" value="X-ray"/>
    <property type="resolution" value="1.84 A"/>
    <property type="chains" value="H/U=8-86"/>
</dbReference>
<dbReference type="PDB" id="7D5X">
    <property type="method" value="X-ray"/>
    <property type="resolution" value="1.74 A"/>
    <property type="chains" value="H/U=8-86"/>
</dbReference>
<dbReference type="PDB" id="7DGQ">
    <property type="method" value="EM"/>
    <property type="resolution" value="5.00 A"/>
    <property type="chains" value="C0=1-86"/>
</dbReference>
<dbReference type="PDB" id="7DGR">
    <property type="method" value="EM"/>
    <property type="resolution" value="4.60 A"/>
    <property type="chains" value="A5=1-86"/>
</dbReference>
<dbReference type="PDB" id="7DGS">
    <property type="method" value="EM"/>
    <property type="resolution" value="7.80 A"/>
    <property type="chains" value="A5=1-86"/>
</dbReference>
<dbReference type="PDB" id="7DKF">
    <property type="method" value="EM"/>
    <property type="resolution" value="8.30 A"/>
    <property type="chains" value="H3=1-86"/>
</dbReference>
<dbReference type="PDB" id="7EV7">
    <property type="method" value="X-ray"/>
    <property type="resolution" value="1.70 A"/>
    <property type="chains" value="H/U=2-86"/>
</dbReference>
<dbReference type="PDB" id="7THU">
    <property type="method" value="X-ray"/>
    <property type="resolution" value="1.93 A"/>
    <property type="chains" value="HHH/UUU=2-86"/>
</dbReference>
<dbReference type="PDB" id="7TIE">
    <property type="method" value="X-ray"/>
    <property type="resolution" value="1.90 A"/>
    <property type="chains" value="HHH/UUU=2-86"/>
</dbReference>
<dbReference type="PDB" id="7TIH">
    <property type="method" value="X-ray"/>
    <property type="resolution" value="2.35 A"/>
    <property type="chains" value="HHH/UUU=2-86"/>
</dbReference>
<dbReference type="PDB" id="7TII">
    <property type="method" value="X-ray"/>
    <property type="resolution" value="2.45 A"/>
    <property type="chains" value="HHH/UUU=2-86"/>
</dbReference>
<dbReference type="PDB" id="7VUW">
    <property type="method" value="X-ray"/>
    <property type="resolution" value="1.60 A"/>
    <property type="chains" value="H/U=8-86"/>
</dbReference>
<dbReference type="PDB" id="7VVR">
    <property type="method" value="X-ray"/>
    <property type="resolution" value="1.65 A"/>
    <property type="chains" value="H/U=8-86"/>
</dbReference>
<dbReference type="PDB" id="7W3E">
    <property type="method" value="X-ray"/>
    <property type="resolution" value="1.45 A"/>
    <property type="chains" value="H/U=8-86"/>
</dbReference>
<dbReference type="PDB" id="7XMA">
    <property type="method" value="X-ray"/>
    <property type="resolution" value="2.20 A"/>
    <property type="chains" value="H/U=2-86"/>
</dbReference>
<dbReference type="PDB" id="7XMB">
    <property type="method" value="X-ray"/>
    <property type="resolution" value="2.20 A"/>
    <property type="chains" value="H/U=2-86"/>
</dbReference>
<dbReference type="PDB" id="7Y44">
    <property type="method" value="X-ray"/>
    <property type="resolution" value="1.90 A"/>
    <property type="chains" value="H/U=2-86"/>
</dbReference>
<dbReference type="PDB" id="7YPY">
    <property type="method" value="X-ray"/>
    <property type="resolution" value="1.50 A"/>
    <property type="chains" value="H/U=2-86"/>
</dbReference>
<dbReference type="PDB" id="8D4T">
    <property type="method" value="EM"/>
    <property type="resolution" value="3.10 A"/>
    <property type="chains" value="U=9-86"/>
</dbReference>
<dbReference type="PDB" id="8GBT">
    <property type="method" value="X-ray"/>
    <property type="resolution" value="2.80 A"/>
    <property type="chains" value="H/U=2-86"/>
</dbReference>
<dbReference type="PDB" id="8GCQ">
    <property type="method" value="X-ray"/>
    <property type="resolution" value="2.38 A"/>
    <property type="chains" value="H/U=2-86"/>
</dbReference>
<dbReference type="PDB" id="8GVM">
    <property type="method" value="X-ray"/>
    <property type="resolution" value="1.85 A"/>
    <property type="chains" value="H/U=2-86"/>
</dbReference>
<dbReference type="PDB" id="8H8R">
    <property type="method" value="X-ray"/>
    <property type="resolution" value="1.70 A"/>
    <property type="chains" value="H/U=2-86"/>
</dbReference>
<dbReference type="PDB" id="8H8S">
    <property type="method" value="X-ray"/>
    <property type="resolution" value="1.70 A"/>
    <property type="chains" value="H/U=2-86"/>
</dbReference>
<dbReference type="PDB" id="8IJN">
    <property type="method" value="X-ray"/>
    <property type="resolution" value="1.80 A"/>
    <property type="chains" value="H/U=2-86"/>
</dbReference>
<dbReference type="PDBsum" id="1OCC"/>
<dbReference type="PDBsum" id="1OCO"/>
<dbReference type="PDBsum" id="1OCR"/>
<dbReference type="PDBsum" id="1OCZ"/>
<dbReference type="PDBsum" id="1V54"/>
<dbReference type="PDBsum" id="1V55"/>
<dbReference type="PDBsum" id="2DYR"/>
<dbReference type="PDBsum" id="2DYS"/>
<dbReference type="PDBsum" id="2EIJ"/>
<dbReference type="PDBsum" id="2EIK"/>
<dbReference type="PDBsum" id="2EIL"/>
<dbReference type="PDBsum" id="2EIM"/>
<dbReference type="PDBsum" id="2EIN"/>
<dbReference type="PDBsum" id="2OCC"/>
<dbReference type="PDBsum" id="2Y69"/>
<dbReference type="PDBsum" id="2YBB"/>
<dbReference type="PDBsum" id="2ZXW"/>
<dbReference type="PDBsum" id="3ABK"/>
<dbReference type="PDBsum" id="3ABL"/>
<dbReference type="PDBsum" id="3ABM"/>
<dbReference type="PDBsum" id="3AG1"/>
<dbReference type="PDBsum" id="3AG2"/>
<dbReference type="PDBsum" id="3AG3"/>
<dbReference type="PDBsum" id="3AG4"/>
<dbReference type="PDBsum" id="3ASN"/>
<dbReference type="PDBsum" id="3ASO"/>
<dbReference type="PDBsum" id="3WG7"/>
<dbReference type="PDBsum" id="3X2Q"/>
<dbReference type="PDBsum" id="5B1A"/>
<dbReference type="PDBsum" id="5B1B"/>
<dbReference type="PDBsum" id="5B3S"/>
<dbReference type="PDBsum" id="5GPN"/>
<dbReference type="PDBsum" id="5IY5"/>
<dbReference type="PDBsum" id="5LUF"/>
<dbReference type="PDBsum" id="5W97"/>
<dbReference type="PDBsum" id="5WAU"/>
<dbReference type="PDBsum" id="5X19"/>
<dbReference type="PDBsum" id="5X1B"/>
<dbReference type="PDBsum" id="5X1F"/>
<dbReference type="PDBsum" id="5XDQ"/>
<dbReference type="PDBsum" id="5XDX"/>
<dbReference type="PDBsum" id="5XTH"/>
<dbReference type="PDBsum" id="5XTI"/>
<dbReference type="PDBsum" id="5Z84"/>
<dbReference type="PDBsum" id="5Z85"/>
<dbReference type="PDBsum" id="5Z86"/>
<dbReference type="PDBsum" id="5ZCO"/>
<dbReference type="PDBsum" id="5ZCP"/>
<dbReference type="PDBsum" id="5ZCQ"/>
<dbReference type="PDBsum" id="6J8M"/>
<dbReference type="PDBsum" id="6JUW"/>
<dbReference type="PDBsum" id="6JY3"/>
<dbReference type="PDBsum" id="6JY4"/>
<dbReference type="PDBsum" id="6NKN"/>
<dbReference type="PDBsum" id="6NMF"/>
<dbReference type="PDBsum" id="6NMP"/>
<dbReference type="PDBsum" id="7COH"/>
<dbReference type="PDBsum" id="7CP5"/>
<dbReference type="PDBsum" id="7D5W"/>
<dbReference type="PDBsum" id="7D5X"/>
<dbReference type="PDBsum" id="7DGQ"/>
<dbReference type="PDBsum" id="7DGR"/>
<dbReference type="PDBsum" id="7DGS"/>
<dbReference type="PDBsum" id="7DKF"/>
<dbReference type="PDBsum" id="7EV7"/>
<dbReference type="PDBsum" id="7THU"/>
<dbReference type="PDBsum" id="7TIE"/>
<dbReference type="PDBsum" id="7TIH"/>
<dbReference type="PDBsum" id="7TII"/>
<dbReference type="PDBsum" id="7VUW"/>
<dbReference type="PDBsum" id="7VVR"/>
<dbReference type="PDBsum" id="7W3E"/>
<dbReference type="PDBsum" id="7XMA"/>
<dbReference type="PDBsum" id="7XMB"/>
<dbReference type="PDBsum" id="7Y44"/>
<dbReference type="PDBsum" id="7YPY"/>
<dbReference type="PDBsum" id="8D4T"/>
<dbReference type="PDBsum" id="8GBT"/>
<dbReference type="PDBsum" id="8GCQ"/>
<dbReference type="PDBsum" id="8GVM"/>
<dbReference type="PDBsum" id="8H8R"/>
<dbReference type="PDBsum" id="8H8S"/>
<dbReference type="PDBsum" id="8IJN"/>
<dbReference type="EMDB" id="EMD-27196"/>
<dbReference type="EMDB" id="EMD-30673"/>
<dbReference type="EMDB" id="EMD-30674"/>
<dbReference type="EMDB" id="EMD-30675"/>
<dbReference type="EMDB" id="EMD-30706"/>
<dbReference type="EMDB" id="EMD-4107"/>
<dbReference type="EMDB" id="EMD-9534"/>
<dbReference type="SMR" id="P00429"/>
<dbReference type="CORUM" id="P00429"/>
<dbReference type="DIP" id="DIP-38988N"/>
<dbReference type="FunCoup" id="P00429">
    <property type="interactions" value="1929"/>
</dbReference>
<dbReference type="IntAct" id="P00429">
    <property type="interactions" value="3"/>
</dbReference>
<dbReference type="STRING" id="9913.ENSBTAP00000065888"/>
<dbReference type="iPTMnet" id="P00429"/>
<dbReference type="PaxDb" id="9913-ENSBTAP00000007369"/>
<dbReference type="PeptideAtlas" id="P00429"/>
<dbReference type="GeneID" id="100270792"/>
<dbReference type="KEGG" id="bta:100270792"/>
<dbReference type="CTD" id="1340"/>
<dbReference type="eggNOG" id="KOG3057">
    <property type="taxonomic scope" value="Eukaryota"/>
</dbReference>
<dbReference type="InParanoid" id="P00429"/>
<dbReference type="OrthoDB" id="1107506at2759"/>
<dbReference type="BRENDA" id="7.1.1.9">
    <property type="organism ID" value="908"/>
</dbReference>
<dbReference type="UniPathway" id="UPA00705"/>
<dbReference type="EvolutionaryTrace" id="P00429"/>
<dbReference type="Proteomes" id="UP000009136">
    <property type="component" value="Unplaced"/>
</dbReference>
<dbReference type="GO" id="GO:0005743">
    <property type="term" value="C:mitochondrial inner membrane"/>
    <property type="evidence" value="ECO:0000250"/>
    <property type="project" value="AgBase"/>
</dbReference>
<dbReference type="GO" id="GO:0005739">
    <property type="term" value="C:mitochondrion"/>
    <property type="evidence" value="ECO:0000250"/>
    <property type="project" value="AgBase"/>
</dbReference>
<dbReference type="GO" id="GO:0045277">
    <property type="term" value="C:respiratory chain complex IV"/>
    <property type="evidence" value="ECO:0000314"/>
    <property type="project" value="UniProtKB"/>
</dbReference>
<dbReference type="GO" id="GO:0006119">
    <property type="term" value="P:oxidative phosphorylation"/>
    <property type="evidence" value="ECO:0007669"/>
    <property type="project" value="UniProtKB-UniPathway"/>
</dbReference>
<dbReference type="CDD" id="cd00926">
    <property type="entry name" value="Cyt_c_Oxidase_VIb"/>
    <property type="match status" value="1"/>
</dbReference>
<dbReference type="FunFam" id="1.10.10.140:FF:000001">
    <property type="entry name" value="Cytochrome c oxidase subunit 6B1"/>
    <property type="match status" value="1"/>
</dbReference>
<dbReference type="Gene3D" id="1.10.10.140">
    <property type="entry name" value="Cytochrome c oxidase, subunit VIb"/>
    <property type="match status" value="1"/>
</dbReference>
<dbReference type="InterPro" id="IPR048280">
    <property type="entry name" value="COX6B-like"/>
</dbReference>
<dbReference type="InterPro" id="IPR036549">
    <property type="entry name" value="CX6/COA6-like_sf"/>
</dbReference>
<dbReference type="InterPro" id="IPR003213">
    <property type="entry name" value="Cyt_c_oxidase_su6B"/>
</dbReference>
<dbReference type="PANTHER" id="PTHR11387">
    <property type="entry name" value="CYTOCHROME C OXIDASE SUBUNIT 6B"/>
    <property type="match status" value="1"/>
</dbReference>
<dbReference type="Pfam" id="PF02297">
    <property type="entry name" value="COX6B"/>
    <property type="match status" value="1"/>
</dbReference>
<dbReference type="PIRSF" id="PIRSF000278">
    <property type="entry name" value="Cyt_c_oxidase_6B"/>
    <property type="match status" value="1"/>
</dbReference>
<dbReference type="SUPFAM" id="SSF47694">
    <property type="entry name" value="Cytochrome c oxidase subunit h"/>
    <property type="match status" value="1"/>
</dbReference>
<dbReference type="PROSITE" id="PS51808">
    <property type="entry name" value="CHCH"/>
    <property type="match status" value="1"/>
</dbReference>
<evidence type="ECO:0000250" key="1">
    <source>
        <dbReference type="UniProtKB" id="P56391"/>
    </source>
</evidence>
<evidence type="ECO:0000250" key="2">
    <source>
        <dbReference type="UniProtKB" id="Q01519"/>
    </source>
</evidence>
<evidence type="ECO:0000255" key="3">
    <source>
        <dbReference type="PROSITE-ProRule" id="PRU01150"/>
    </source>
</evidence>
<evidence type="ECO:0000269" key="4">
    <source>
    </source>
</evidence>
<evidence type="ECO:0000269" key="5">
    <source>
    </source>
</evidence>
<evidence type="ECO:0000269" key="6">
    <source>
    </source>
</evidence>
<evidence type="ECO:0000269" key="7">
    <source>
    </source>
</evidence>
<evidence type="ECO:0000269" key="8">
    <source>
    </source>
</evidence>
<evidence type="ECO:0000269" key="9">
    <source>
    </source>
</evidence>
<evidence type="ECO:0000269" key="10">
    <source>
    </source>
</evidence>
<evidence type="ECO:0000269" key="11">
    <source>
    </source>
</evidence>
<evidence type="ECO:0000305" key="12"/>
<evidence type="ECO:0007829" key="13">
    <source>
        <dbReference type="PDB" id="7COH"/>
    </source>
</evidence>
<evidence type="ECO:0007829" key="14">
    <source>
        <dbReference type="PDB" id="8GCQ"/>
    </source>
</evidence>
<comment type="function">
    <text evidence="2">Component of the cytochrome c oxidase, the last enzyme in the mitochondrial electron transport chain which drives oxidative phosphorylation. The respiratory chain contains 3 multisubunit complexes succinate dehydrogenase (complex II, CII), ubiquinol-cytochrome c oxidoreductase (cytochrome b-c1 complex, complex III, CIII) and cytochrome c oxidase (complex IV, CIV), that cooperate to transfer electrons derived from NADH and succinate to molecular oxygen, creating an electrochemical gradient over the inner membrane that drives transmembrane transport and the ATP synthase. Cytochrome c oxidase is the component of the respiratory chain that catalyzes the reduction of oxygen to water. Electrons originating from reduced cytochrome c in the intermembrane space (IMS) are transferred via the dinuclear copper A center (CU(A)) of subunit 2 and heme A of subunit 1 to the active site in subunit 1, a binuclear center (BNC) formed by heme A3 and copper B (CU(B)). The BNC reduces molecular oxygen to 2 water molecules using 4 electrons from cytochrome c in the IMS and 4 protons from the mitochondrial matrix.</text>
</comment>
<comment type="pathway">
    <text evidence="2">Energy metabolism; oxidative phosphorylation.</text>
</comment>
<comment type="subunit">
    <text evidence="6 8 11">Component of the cytochrome c oxidase (complex IV, CIV), a multisubunit enzyme composed of 14 subunits. The complex is composed of a catalytic core of 3 subunits MT-CO1, MT-CO2 and MT-CO3, encoded in the mitochondrial DNA, and 11 supernumerary subunits COX4I1 (or COX4I2), COX5A, COX5B, COX6A2 (or COX6A1), COX6B1 (or COX6B2), COX6C, COX7A1 (or COX7A2), COX7B, COX7C, COX8B and NDUFA4, which are encoded in the nuclear genome (PubMed:8638158). The complex exists as a monomer or a dimer and forms supercomplexes (SCs) in the inner mitochondrial membrane with NADH-ubiquinone oxidoreductase (complex I, CI) and ubiquinol-cytochrome c oxidoreductase (cytochrome b-c1 complex, complex III, CIII), resulting in different assemblies (supercomplex SCI(1)III(2)IV(1) and megacomplex MCI(2)III(2)IV(2)) (PubMed:26698328, PubMed:27830641).</text>
</comment>
<comment type="subcellular location">
    <subcellularLocation>
        <location evidence="7 9">Mitochondrion inner membrane</location>
        <topology evidence="7 9">Peripheral membrane protein</topology>
        <orientation evidence="7 9">Intermembrane side</orientation>
    </subcellularLocation>
</comment>
<comment type="similarity">
    <text evidence="12">Belongs to the cytochrome c oxidase subunit 6B family.</text>
</comment>